<protein>
    <recommendedName>
        <fullName evidence="1">DNA-directed RNA polymerase subunit beta</fullName>
        <shortName evidence="1">RNAP subunit beta</shortName>
        <ecNumber evidence="1">2.7.7.6</ecNumber>
    </recommendedName>
    <alternativeName>
        <fullName evidence="1">RNA polymerase subunit beta</fullName>
    </alternativeName>
    <alternativeName>
        <fullName evidence="1">Transcriptase subunit beta</fullName>
    </alternativeName>
</protein>
<organism>
    <name type="scientific">Leptospira interrogans serogroup Icterohaemorrhagiae serovar Lai (strain 56601)</name>
    <dbReference type="NCBI Taxonomy" id="189518"/>
    <lineage>
        <taxon>Bacteria</taxon>
        <taxon>Pseudomonadati</taxon>
        <taxon>Spirochaetota</taxon>
        <taxon>Spirochaetia</taxon>
        <taxon>Leptospirales</taxon>
        <taxon>Leptospiraceae</taxon>
        <taxon>Leptospira</taxon>
    </lineage>
</organism>
<name>RPOB_LEPIN</name>
<feature type="chain" id="PRO_0000047912" description="DNA-directed RNA polymerase subunit beta">
    <location>
        <begin position="1"/>
        <end position="1226"/>
    </location>
</feature>
<gene>
    <name evidence="1" type="primary">rpoB</name>
    <name type="ordered locus">LA_3420</name>
</gene>
<evidence type="ECO:0000255" key="1">
    <source>
        <dbReference type="HAMAP-Rule" id="MF_01321"/>
    </source>
</evidence>
<accession>Q8F0S2</accession>
<sequence>MYGQVERKRVNFGKITNLDYLPNLIQIQKRSFDWFLQADVKDETKRRHQGLEAVFRETFPIESPNNDMIMEYSHYILGEPKRSPQECKDTDATFAMPLKAVIRLIIKETGEIREQTVYMGDLPVMTEQGTFIINGAERVVVSQLHRSPGIFFSYDMERDVFSARVIPYRGSWLEFEMDNKGILIAKIDRKKKFPATLLVKSLGHGTNEEVLRLFYSSKKEKIAGATSKDLKKILGRRTINDIINMETGEVMLEAGSKINEDNISILKEMKVKEVELIEFPKGKDNPILINALEKDGVNDYEDAILKFHSLMRQGEPSTIENATTELTRLFFSPKTFDLGEVGRYKINSKFEFNNPKEFSGEKARVLRPADIIETVRYILNLFSETENYYPDDIDHLGNRRIRSVGELISNQLKTGFSRVERVIKERMTVQEIETQTPQLLISIKPITAVINEFFGSSQLSQFMDQTNPLAELTHKRRLNALGPGGLSRDRAGMEVRDVHYSHYGRMCPIETPEGPNIGLILSMSSYARVNDYGFLETPYRTVKNGKVTGQIEHLTADKEEYHYIAQASGVIDEKGELKNKLISTRHRGDFPFRNPSEIQYMDLAPLQVVSVSTALIPFLEHDDANRALMGSNMQRQAVPLLREEAPFVGTGMETRAAYDSRICIVNKHDGVVTSVDAENIVVERKGGKESDTYQLTKFKKTNQGTCFNQKPIVGVVHSEINGKVSKVSKEKIEVTGENGELKEYVLQIGSKQYSPIVSAGEEVKRGSTLAGQVVVGEKLDEMGNILVKGTVLADGPAVDNGVLALGRNVLAAFMPWEGYNFEDAILISERIVRDDVFSSIHIEEFEIQARETKLGPEQITRDIPNLSDKAFRDLDETGVIRIGAEVKPGDILVGMVTPKGETDLTPEYKLLHSIFGEKAKDVRDSSLRMPNGFEGTVIDIKRFSRENQDELPAGVEEMVKVFVARKRKLLVGDKMAGRHGNKGVVARVMAEEDMPYMEDGTPLDIVLNPLGVPSRMNLGQIFETQLGFAASKLGISFETPVFDGAEESDVDNFCKEANLPLNSKFKLYDGRTGLPFMNEVFCGYIYILKLAHLVEDKIHARSTGPYSLVTQQPLGGKAQFGGQRLGEMEVWALEAYGASHTLQELLTIKSDDMLGRARIYEAIVKGIHSIKPGIPESFNVLVQELRGLALDIIITDSEGNTVDISDYEDEYSKSKKKIKFETIENA</sequence>
<comment type="function">
    <text evidence="1">DNA-dependent RNA polymerase catalyzes the transcription of DNA into RNA using the four ribonucleoside triphosphates as substrates.</text>
</comment>
<comment type="catalytic activity">
    <reaction evidence="1">
        <text>RNA(n) + a ribonucleoside 5'-triphosphate = RNA(n+1) + diphosphate</text>
        <dbReference type="Rhea" id="RHEA:21248"/>
        <dbReference type="Rhea" id="RHEA-COMP:14527"/>
        <dbReference type="Rhea" id="RHEA-COMP:17342"/>
        <dbReference type="ChEBI" id="CHEBI:33019"/>
        <dbReference type="ChEBI" id="CHEBI:61557"/>
        <dbReference type="ChEBI" id="CHEBI:140395"/>
        <dbReference type="EC" id="2.7.7.6"/>
    </reaction>
</comment>
<comment type="subunit">
    <text evidence="1">The RNAP catalytic core consists of 2 alpha, 1 beta, 1 beta' and 1 omega subunit. When a sigma factor is associated with the core the holoenzyme is formed, which can initiate transcription.</text>
</comment>
<comment type="similarity">
    <text evidence="1">Belongs to the RNA polymerase beta chain family.</text>
</comment>
<reference key="1">
    <citation type="journal article" date="2003" name="Nature">
        <title>Unique physiological and pathogenic features of Leptospira interrogans revealed by whole-genome sequencing.</title>
        <authorList>
            <person name="Ren S.-X."/>
            <person name="Fu G."/>
            <person name="Jiang X.-G."/>
            <person name="Zeng R."/>
            <person name="Miao Y.-G."/>
            <person name="Xu H."/>
            <person name="Zhang Y.-X."/>
            <person name="Xiong H."/>
            <person name="Lu G."/>
            <person name="Lu L.-F."/>
            <person name="Jiang H.-Q."/>
            <person name="Jia J."/>
            <person name="Tu Y.-F."/>
            <person name="Jiang J.-X."/>
            <person name="Gu W.-Y."/>
            <person name="Zhang Y.-Q."/>
            <person name="Cai Z."/>
            <person name="Sheng H.-H."/>
            <person name="Yin H.-F."/>
            <person name="Zhang Y."/>
            <person name="Zhu G.-F."/>
            <person name="Wan M."/>
            <person name="Huang H.-L."/>
            <person name="Qian Z."/>
            <person name="Wang S.-Y."/>
            <person name="Ma W."/>
            <person name="Yao Z.-J."/>
            <person name="Shen Y."/>
            <person name="Qiang B.-Q."/>
            <person name="Xia Q.-C."/>
            <person name="Guo X.-K."/>
            <person name="Danchin A."/>
            <person name="Saint Girons I."/>
            <person name="Somerville R.L."/>
            <person name="Wen Y.-M."/>
            <person name="Shi M.-H."/>
            <person name="Chen Z."/>
            <person name="Xu J.-G."/>
            <person name="Zhao G.-P."/>
        </authorList>
    </citation>
    <scope>NUCLEOTIDE SEQUENCE [LARGE SCALE GENOMIC DNA]</scope>
    <source>
        <strain>56601</strain>
    </source>
</reference>
<dbReference type="EC" id="2.7.7.6" evidence="1"/>
<dbReference type="EMBL" id="AE010300">
    <property type="protein sequence ID" value="AAN50618.1"/>
    <property type="molecule type" value="Genomic_DNA"/>
</dbReference>
<dbReference type="RefSeq" id="NP_713600.1">
    <property type="nucleotide sequence ID" value="NC_004342.2"/>
</dbReference>
<dbReference type="RefSeq" id="WP_000274330.1">
    <property type="nucleotide sequence ID" value="NC_004342.2"/>
</dbReference>
<dbReference type="SMR" id="Q8F0S2"/>
<dbReference type="FunCoup" id="Q8F0S2">
    <property type="interactions" value="498"/>
</dbReference>
<dbReference type="STRING" id="189518.LA_3420"/>
<dbReference type="PaxDb" id="189518-LA_3420"/>
<dbReference type="EnsemblBacteria" id="AAN50618">
    <property type="protein sequence ID" value="AAN50618"/>
    <property type="gene ID" value="LA_3420"/>
</dbReference>
<dbReference type="KEGG" id="lil:LA_3420"/>
<dbReference type="PATRIC" id="fig|189518.3.peg.3385"/>
<dbReference type="HOGENOM" id="CLU_000524_4_3_12"/>
<dbReference type="InParanoid" id="Q8F0S2"/>
<dbReference type="OrthoDB" id="9803954at2"/>
<dbReference type="Proteomes" id="UP000001408">
    <property type="component" value="Chromosome I"/>
</dbReference>
<dbReference type="GO" id="GO:0000428">
    <property type="term" value="C:DNA-directed RNA polymerase complex"/>
    <property type="evidence" value="ECO:0007669"/>
    <property type="project" value="UniProtKB-KW"/>
</dbReference>
<dbReference type="GO" id="GO:0003677">
    <property type="term" value="F:DNA binding"/>
    <property type="evidence" value="ECO:0007669"/>
    <property type="project" value="UniProtKB-UniRule"/>
</dbReference>
<dbReference type="GO" id="GO:0003899">
    <property type="term" value="F:DNA-directed RNA polymerase activity"/>
    <property type="evidence" value="ECO:0007669"/>
    <property type="project" value="UniProtKB-UniRule"/>
</dbReference>
<dbReference type="GO" id="GO:0032549">
    <property type="term" value="F:ribonucleoside binding"/>
    <property type="evidence" value="ECO:0007669"/>
    <property type="project" value="InterPro"/>
</dbReference>
<dbReference type="GO" id="GO:0006351">
    <property type="term" value="P:DNA-templated transcription"/>
    <property type="evidence" value="ECO:0007669"/>
    <property type="project" value="UniProtKB-UniRule"/>
</dbReference>
<dbReference type="CDD" id="cd00653">
    <property type="entry name" value="RNA_pol_B_RPB2"/>
    <property type="match status" value="1"/>
</dbReference>
<dbReference type="Gene3D" id="2.40.50.100">
    <property type="match status" value="2"/>
</dbReference>
<dbReference type="Gene3D" id="2.40.50.150">
    <property type="match status" value="1"/>
</dbReference>
<dbReference type="Gene3D" id="3.90.1100.10">
    <property type="match status" value="1"/>
</dbReference>
<dbReference type="Gene3D" id="2.30.150.10">
    <property type="entry name" value="DNA-directed RNA polymerase, beta subunit, external 1 domain"/>
    <property type="match status" value="1"/>
</dbReference>
<dbReference type="Gene3D" id="2.40.270.10">
    <property type="entry name" value="DNA-directed RNA polymerase, subunit 2, domain 6"/>
    <property type="match status" value="1"/>
</dbReference>
<dbReference type="Gene3D" id="3.90.1800.10">
    <property type="entry name" value="RNA polymerase alpha subunit dimerisation domain"/>
    <property type="match status" value="1"/>
</dbReference>
<dbReference type="Gene3D" id="3.90.1110.10">
    <property type="entry name" value="RNA polymerase Rpb2, domain 2"/>
    <property type="match status" value="1"/>
</dbReference>
<dbReference type="HAMAP" id="MF_01321">
    <property type="entry name" value="RNApol_bact_RpoB"/>
    <property type="match status" value="1"/>
</dbReference>
<dbReference type="InterPro" id="IPR042107">
    <property type="entry name" value="DNA-dir_RNA_pol_bsu_ext_1_sf"/>
</dbReference>
<dbReference type="InterPro" id="IPR019462">
    <property type="entry name" value="DNA-dir_RNA_pol_bsu_external_1"/>
</dbReference>
<dbReference type="InterPro" id="IPR015712">
    <property type="entry name" value="DNA-dir_RNA_pol_su2"/>
</dbReference>
<dbReference type="InterPro" id="IPR007120">
    <property type="entry name" value="DNA-dir_RNAP_su2_dom"/>
</dbReference>
<dbReference type="InterPro" id="IPR037033">
    <property type="entry name" value="DNA-dir_RNAP_su2_hyb_sf"/>
</dbReference>
<dbReference type="InterPro" id="IPR010243">
    <property type="entry name" value="RNA_pol_bsu_bac"/>
</dbReference>
<dbReference type="InterPro" id="IPR007121">
    <property type="entry name" value="RNA_pol_bsu_CS"/>
</dbReference>
<dbReference type="InterPro" id="IPR007644">
    <property type="entry name" value="RNA_pol_bsu_protrusion"/>
</dbReference>
<dbReference type="InterPro" id="IPR007642">
    <property type="entry name" value="RNA_pol_Rpb2_2"/>
</dbReference>
<dbReference type="InterPro" id="IPR037034">
    <property type="entry name" value="RNA_pol_Rpb2_2_sf"/>
</dbReference>
<dbReference type="InterPro" id="IPR007645">
    <property type="entry name" value="RNA_pol_Rpb2_3"/>
</dbReference>
<dbReference type="InterPro" id="IPR007641">
    <property type="entry name" value="RNA_pol_Rpb2_7"/>
</dbReference>
<dbReference type="InterPro" id="IPR014724">
    <property type="entry name" value="RNA_pol_RPB2_OB-fold"/>
</dbReference>
<dbReference type="NCBIfam" id="TIGR02013">
    <property type="entry name" value="rpoB"/>
    <property type="match status" value="1"/>
</dbReference>
<dbReference type="PANTHER" id="PTHR20856">
    <property type="entry name" value="DNA-DIRECTED RNA POLYMERASE I SUBUNIT 2"/>
    <property type="match status" value="1"/>
</dbReference>
<dbReference type="Pfam" id="PF04563">
    <property type="entry name" value="RNA_pol_Rpb2_1"/>
    <property type="match status" value="1"/>
</dbReference>
<dbReference type="Pfam" id="PF04561">
    <property type="entry name" value="RNA_pol_Rpb2_2"/>
    <property type="match status" value="1"/>
</dbReference>
<dbReference type="Pfam" id="PF04565">
    <property type="entry name" value="RNA_pol_Rpb2_3"/>
    <property type="match status" value="1"/>
</dbReference>
<dbReference type="Pfam" id="PF10385">
    <property type="entry name" value="RNA_pol_Rpb2_45"/>
    <property type="match status" value="1"/>
</dbReference>
<dbReference type="Pfam" id="PF00562">
    <property type="entry name" value="RNA_pol_Rpb2_6"/>
    <property type="match status" value="1"/>
</dbReference>
<dbReference type="Pfam" id="PF04560">
    <property type="entry name" value="RNA_pol_Rpb2_7"/>
    <property type="match status" value="1"/>
</dbReference>
<dbReference type="SUPFAM" id="SSF64484">
    <property type="entry name" value="beta and beta-prime subunits of DNA dependent RNA-polymerase"/>
    <property type="match status" value="1"/>
</dbReference>
<dbReference type="PROSITE" id="PS01166">
    <property type="entry name" value="RNA_POL_BETA"/>
    <property type="match status" value="1"/>
</dbReference>
<proteinExistence type="inferred from homology"/>
<keyword id="KW-0240">DNA-directed RNA polymerase</keyword>
<keyword id="KW-0548">Nucleotidyltransferase</keyword>
<keyword id="KW-1185">Reference proteome</keyword>
<keyword id="KW-0804">Transcription</keyword>
<keyword id="KW-0808">Transferase</keyword>